<proteinExistence type="inferred from homology"/>
<organism>
    <name type="scientific">Drosophila virilis</name>
    <name type="common">Fruit fly</name>
    <dbReference type="NCBI Taxonomy" id="7244"/>
    <lineage>
        <taxon>Eukaryota</taxon>
        <taxon>Metazoa</taxon>
        <taxon>Ecdysozoa</taxon>
        <taxon>Arthropoda</taxon>
        <taxon>Hexapoda</taxon>
        <taxon>Insecta</taxon>
        <taxon>Pterygota</taxon>
        <taxon>Neoptera</taxon>
        <taxon>Endopterygota</taxon>
        <taxon>Diptera</taxon>
        <taxon>Brachycera</taxon>
        <taxon>Muscomorpha</taxon>
        <taxon>Ephydroidea</taxon>
        <taxon>Drosophilidae</taxon>
        <taxon>Drosophila</taxon>
    </lineage>
</organism>
<evidence type="ECO:0000250" key="1"/>
<evidence type="ECO:0000250" key="2">
    <source>
        <dbReference type="UniProtKB" id="Q9U969"/>
    </source>
</evidence>
<evidence type="ECO:0000255" key="3"/>
<evidence type="ECO:0000255" key="4">
    <source>
        <dbReference type="PROSITE-ProRule" id="PRU01161"/>
    </source>
</evidence>
<evidence type="ECO:0000256" key="5">
    <source>
        <dbReference type="SAM" id="MobiDB-lite"/>
    </source>
</evidence>
<evidence type="ECO:0000312" key="6">
    <source>
        <dbReference type="EMBL" id="EDW62576.1"/>
    </source>
</evidence>
<sequence length="1483" mass="167295">MDVLELLRASANGCYNTLFSDAWFQYVSKQIATTMYWYGALLVIGVLFIAWFLYFKRLARLRLRDEIARSLSAVTSSGGDHRGLRFRKRDKMLFYGRRMLRKMKNVSGQMYSSGKGYKRRAVMRFARRILQLQRENRPLEMKTVEPPAEYLEETIEGSDRVPPDALYMLQSIRIFGHFEKPIFLKLCKHTQLLQLMAGDYLFKITDPDDSVYIVQSGMINVYICNADGSTLSLKTVRKGESVTSLLSFIDVLSGNSSYYKTVTAKAMEKSVVIRLPMQAFEEVFEENPDVMIRVIQVIMIRLQRVLFTALRNYLGLNAELVQNHMRTKGSSVVPNAVGGAVLAQASQASRPVVRAPTSPNSRLSREEHTLSDPDPNPNANALLFAEVHGDAPYIDLYHHQQQQSSAVSVNQAGTRRSSTTYGPSGESPNGNANTAPGTSIDQRLVQSSAVDSLRRELGLSEDDAQIIEPFVEVRELEPNVTLITEGNAEDVCVWFVMTGTLAVYQSNADATRATKQDSKNDVLIHFVHPGEIVGGLAMLTGEASAYTIRARSNSRVAYIRRAAIYQIMRQRPRIVLDLGNGVVRRLSPLVRQCDYALDWIFLESGRAVYRQDESSDSTYIVLSGRMRSVITHPGGKKEIIGEYGKGDLVGIVEMITETSRTTTVMAVRDSELAKLPEGLFNAIKLRYPIVVTRLISFLSHRFLGSMQTRGSNAAGGPVEANPVTHKYSTVALVPITDDVPLTPFTYELYHSLCAIGPVLRLTSEVVRKQLGINIFEAANEYRLTSWLAQQEDRNIITLYQCDSSLSPWTQRCMRQADVVLIVGLGERSHLVGKFEREIDKLAMRTQKELVLLYPETTNAKPANTLSWLNARPWVTKHHHVLCVKRIFTRKSQYRINDLYSRVLLSEPNMHSDFSRLARWLTGNSIGLVLGGGGARGAAHIGMLKAIQEAGIPIDMVGGVSIGALMGALWCSERNITTVTQKAREWSKKMTKWFLQLLDLTYPITSMFSGREFNKTIHDTFGDVSIEDLWIPYFTLTTDITASCHRIHTNGSLWRYVRSSMSLSGYMPPLCDPQDGHLLLDGGYVNNLPGHLWRYCRASMSIAGVFPPFCDYRDGHLLLDGCYTNNVPADVMHNLGAAHIIAIDVGSQDDTDLTNYGDDLSGWWLLYKKWNPFTSPVKVPDLPDIQSRLAYVSCVRQLEEVKNSDYCEYIRPPIDKYKTLAFGSFDEIRDVGYVFGKNYFDNMAKAGRLGRFNQWFNKEPPKRGNHASLNEYTFIDLAQIVCKLPETYALNTADIFSEDEDFDGYISEPTTLNMDRRRIQVPRAGNSLSFSETEMDSDVEIDLELERKVDKATQSTPPTPNKQHALSPTSSQTNLLPLPPNSKPKEKQPSYDKLDREHKRRQKSKQKQQQERSSMQQRDSMVTLHPATMAEATTQTAPHSSEEDELNKPEQQPEQKPVPETEEQQQKQQDQQQQENLTKTDTKN</sequence>
<reference evidence="6" key="1">
    <citation type="journal article" date="2007" name="Nature">
        <title>Evolution of genes and genomes on the Drosophila phylogeny.</title>
        <authorList>
            <consortium name="Drosophila 12 genomes consortium"/>
        </authorList>
    </citation>
    <scope>NUCLEOTIDE SEQUENCE [LARGE SCALE GENOMIC DNA]</scope>
    <source>
        <strain evidence="6">Tucson 15010-1051.87</strain>
    </source>
</reference>
<accession>B4M709</accession>
<name>SWS_DROVI</name>
<comment type="function">
    <text evidence="2">Phospholipase B that deacylates intracellular phosphatidylcholine (PtdCho), generating glycerophosphocholine (GroPtdCho). This deacylation occurs at both sn-2 and sn-1 positions of PtdCho. Its specific chemical modification by certain organophosphorus (OP) compounds leads to distal axonopathy. Plays a role in the signaling mechanism between neurons and glia that regulates glia wrapping during development of the adult brain. Essential for membrane lipid homeostasis and cell survival in both neurons and glia of the adult brain (By similarity).</text>
</comment>
<comment type="catalytic activity">
    <reaction evidence="2">
        <text>a 1-acyl-sn-glycero-3-phosphocholine + H2O = sn-glycerol 3-phosphocholine + a fatty acid + H(+)</text>
        <dbReference type="Rhea" id="RHEA:15177"/>
        <dbReference type="ChEBI" id="CHEBI:15377"/>
        <dbReference type="ChEBI" id="CHEBI:15378"/>
        <dbReference type="ChEBI" id="CHEBI:16870"/>
        <dbReference type="ChEBI" id="CHEBI:28868"/>
        <dbReference type="ChEBI" id="CHEBI:58168"/>
        <dbReference type="EC" id="3.1.1.5"/>
    </reaction>
</comment>
<comment type="subunit">
    <text evidence="1">Interacts with Pka-C3; interaction inhibits the catalytic function of Pka-C3 and the esterase activity of sws.</text>
</comment>
<comment type="subcellular location">
    <subcellularLocation>
        <location evidence="2">Endoplasmic reticulum membrane</location>
        <topology evidence="2">Single-pass type I membrane protein</topology>
    </subcellularLocation>
    <text evidence="2">Sws tethers Pka-C3 to the membrane.</text>
</comment>
<comment type="similarity">
    <text evidence="3">Belongs to the NTE family.</text>
</comment>
<gene>
    <name evidence="2" type="primary">sws</name>
    <name type="ORF">GJ16892</name>
</gene>
<keyword id="KW-0217">Developmental protein</keyword>
<keyword id="KW-0256">Endoplasmic reticulum</keyword>
<keyword id="KW-0378">Hydrolase</keyword>
<keyword id="KW-0442">Lipid degradation</keyword>
<keyword id="KW-0443">Lipid metabolism</keyword>
<keyword id="KW-0472">Membrane</keyword>
<keyword id="KW-0524">Neurogenesis</keyword>
<keyword id="KW-0597">Phosphoprotein</keyword>
<keyword id="KW-1185">Reference proteome</keyword>
<keyword id="KW-0812">Transmembrane</keyword>
<keyword id="KW-1133">Transmembrane helix</keyword>
<protein>
    <recommendedName>
        <fullName evidence="2">Neuropathy target esterase sws</fullName>
    </recommendedName>
    <alternativeName>
        <fullName evidence="2">Swiss cheese</fullName>
        <ecNumber>3.1.1.5</ecNumber>
    </alternativeName>
</protein>
<dbReference type="EC" id="3.1.1.5"/>
<dbReference type="EMBL" id="CH940653">
    <property type="protein sequence ID" value="EDW62576.1"/>
    <property type="molecule type" value="Genomic_DNA"/>
</dbReference>
<dbReference type="RefSeq" id="XP_002057090.2">
    <property type="nucleotide sequence ID" value="XM_002057054.2"/>
</dbReference>
<dbReference type="SMR" id="B4M709"/>
<dbReference type="FunCoup" id="B4M709">
    <property type="interactions" value="506"/>
</dbReference>
<dbReference type="STRING" id="7244.B4M709"/>
<dbReference type="GeneID" id="6633725"/>
<dbReference type="KEGG" id="dvi:6633725"/>
<dbReference type="CTD" id="31716"/>
<dbReference type="eggNOG" id="KOG2968">
    <property type="taxonomic scope" value="Eukaryota"/>
</dbReference>
<dbReference type="HOGENOM" id="CLU_000960_1_0_1"/>
<dbReference type="InParanoid" id="B4M709"/>
<dbReference type="OMA" id="GQQEDRH"/>
<dbReference type="OrthoDB" id="421051at2759"/>
<dbReference type="PhylomeDB" id="B4M709"/>
<dbReference type="Proteomes" id="UP000008792">
    <property type="component" value="Unassembled WGS sequence"/>
</dbReference>
<dbReference type="GO" id="GO:0005789">
    <property type="term" value="C:endoplasmic reticulum membrane"/>
    <property type="evidence" value="ECO:0000250"/>
    <property type="project" value="UniProtKB"/>
</dbReference>
<dbReference type="GO" id="GO:0005886">
    <property type="term" value="C:plasma membrane"/>
    <property type="evidence" value="ECO:0007669"/>
    <property type="project" value="EnsemblMetazoa"/>
</dbReference>
<dbReference type="GO" id="GO:0004622">
    <property type="term" value="F:lysophospholipase activity"/>
    <property type="evidence" value="ECO:0000250"/>
    <property type="project" value="UniProtKB"/>
</dbReference>
<dbReference type="GO" id="GO:0034236">
    <property type="term" value="F:protein kinase A catalytic subunit binding"/>
    <property type="evidence" value="ECO:0007669"/>
    <property type="project" value="EnsemblMetazoa"/>
</dbReference>
<dbReference type="GO" id="GO:0007272">
    <property type="term" value="P:ensheathment of neurons"/>
    <property type="evidence" value="ECO:0007669"/>
    <property type="project" value="EnsemblMetazoa"/>
</dbReference>
<dbReference type="GO" id="GO:0034349">
    <property type="term" value="P:glial cell apoptotic process"/>
    <property type="evidence" value="ECO:0000250"/>
    <property type="project" value="UniProtKB"/>
</dbReference>
<dbReference type="GO" id="GO:0016042">
    <property type="term" value="P:lipid catabolic process"/>
    <property type="evidence" value="ECO:0007669"/>
    <property type="project" value="UniProtKB-KW"/>
</dbReference>
<dbReference type="GO" id="GO:0006643">
    <property type="term" value="P:membrane lipid metabolic process"/>
    <property type="evidence" value="ECO:0000250"/>
    <property type="project" value="UniProtKB"/>
</dbReference>
<dbReference type="GO" id="GO:0061024">
    <property type="term" value="P:membrane organization"/>
    <property type="evidence" value="ECO:0000250"/>
    <property type="project" value="UniProtKB"/>
</dbReference>
<dbReference type="GO" id="GO:0051402">
    <property type="term" value="P:neuron apoptotic process"/>
    <property type="evidence" value="ECO:0000250"/>
    <property type="project" value="UniProtKB"/>
</dbReference>
<dbReference type="GO" id="GO:0046470">
    <property type="term" value="P:phosphatidylcholine metabolic process"/>
    <property type="evidence" value="ECO:0000250"/>
    <property type="project" value="UniProtKB"/>
</dbReference>
<dbReference type="GO" id="GO:0045494">
    <property type="term" value="P:photoreceptor cell maintenance"/>
    <property type="evidence" value="ECO:0007669"/>
    <property type="project" value="EnsemblMetazoa"/>
</dbReference>
<dbReference type="GO" id="GO:0072657">
    <property type="term" value="P:protein localization to membrane"/>
    <property type="evidence" value="ECO:0007669"/>
    <property type="project" value="EnsemblMetazoa"/>
</dbReference>
<dbReference type="GO" id="GO:0007608">
    <property type="term" value="P:sensory perception of smell"/>
    <property type="evidence" value="ECO:0007669"/>
    <property type="project" value="EnsemblMetazoa"/>
</dbReference>
<dbReference type="CDD" id="cd00038">
    <property type="entry name" value="CAP_ED"/>
    <property type="match status" value="3"/>
</dbReference>
<dbReference type="CDD" id="cd07225">
    <property type="entry name" value="Pat_PNPLA6_PNPLA7"/>
    <property type="match status" value="1"/>
</dbReference>
<dbReference type="FunFam" id="2.60.120.10:FF:000010">
    <property type="entry name" value="neuropathy target esterase isoform X1"/>
    <property type="match status" value="1"/>
</dbReference>
<dbReference type="FunFam" id="2.60.120.10:FF:000122">
    <property type="entry name" value="Neuropathy target esterase sws"/>
    <property type="match status" value="1"/>
</dbReference>
<dbReference type="FunFam" id="2.60.120.10:FF:000135">
    <property type="entry name" value="Neuropathy target esterase sws"/>
    <property type="match status" value="1"/>
</dbReference>
<dbReference type="FunFam" id="3.40.1090.10:FF:000022">
    <property type="entry name" value="Neuropathy target esterase sws"/>
    <property type="match status" value="1"/>
</dbReference>
<dbReference type="FunFam" id="3.40.1090.10:FF:000033">
    <property type="entry name" value="Neuropathy target esterase sws"/>
    <property type="match status" value="1"/>
</dbReference>
<dbReference type="Gene3D" id="3.40.1090.10">
    <property type="entry name" value="Cytosolic phospholipase A2 catalytic domain"/>
    <property type="match status" value="2"/>
</dbReference>
<dbReference type="Gene3D" id="2.60.120.10">
    <property type="entry name" value="Jelly Rolls"/>
    <property type="match status" value="3"/>
</dbReference>
<dbReference type="InterPro" id="IPR016035">
    <property type="entry name" value="Acyl_Trfase/lysoPLipase"/>
</dbReference>
<dbReference type="InterPro" id="IPR000595">
    <property type="entry name" value="cNMP-bd_dom"/>
</dbReference>
<dbReference type="InterPro" id="IPR018490">
    <property type="entry name" value="cNMP-bd_dom_sf"/>
</dbReference>
<dbReference type="InterPro" id="IPR001423">
    <property type="entry name" value="LysoPLipase_patatin_CS"/>
</dbReference>
<dbReference type="InterPro" id="IPR050301">
    <property type="entry name" value="NTE"/>
</dbReference>
<dbReference type="InterPro" id="IPR056556">
    <property type="entry name" value="NTE1_P-loop_dom"/>
</dbReference>
<dbReference type="InterPro" id="IPR002641">
    <property type="entry name" value="PNPLA_dom"/>
</dbReference>
<dbReference type="InterPro" id="IPR014710">
    <property type="entry name" value="RmlC-like_jellyroll"/>
</dbReference>
<dbReference type="PANTHER" id="PTHR14226:SF29">
    <property type="entry name" value="NEUROPATHY TARGET ESTERASE SWS"/>
    <property type="match status" value="1"/>
</dbReference>
<dbReference type="PANTHER" id="PTHR14226">
    <property type="entry name" value="NEUROPATHY TARGET ESTERASE/SWISS CHEESE D.MELANOGASTER"/>
    <property type="match status" value="1"/>
</dbReference>
<dbReference type="Pfam" id="PF00027">
    <property type="entry name" value="cNMP_binding"/>
    <property type="match status" value="3"/>
</dbReference>
<dbReference type="Pfam" id="PF24179">
    <property type="entry name" value="NTE_Ploop"/>
    <property type="match status" value="1"/>
</dbReference>
<dbReference type="Pfam" id="PF01734">
    <property type="entry name" value="Patatin"/>
    <property type="match status" value="1"/>
</dbReference>
<dbReference type="SMART" id="SM00100">
    <property type="entry name" value="cNMP"/>
    <property type="match status" value="3"/>
</dbReference>
<dbReference type="SUPFAM" id="SSF51206">
    <property type="entry name" value="cAMP-binding domain-like"/>
    <property type="match status" value="3"/>
</dbReference>
<dbReference type="SUPFAM" id="SSF52151">
    <property type="entry name" value="FabD/lysophospholipase-like"/>
    <property type="match status" value="2"/>
</dbReference>
<dbReference type="PROSITE" id="PS50042">
    <property type="entry name" value="CNMP_BINDING_3"/>
    <property type="match status" value="3"/>
</dbReference>
<dbReference type="PROSITE" id="PS51635">
    <property type="entry name" value="PNPLA"/>
    <property type="match status" value="1"/>
</dbReference>
<dbReference type="PROSITE" id="PS01237">
    <property type="entry name" value="UPF0028"/>
    <property type="match status" value="1"/>
</dbReference>
<feature type="chain" id="PRO_0000389227" description="Neuropathy target esterase sws">
    <location>
        <begin position="1"/>
        <end position="1483"/>
    </location>
</feature>
<feature type="topological domain" description="Lumenal" evidence="3">
    <location>
        <begin position="1"/>
        <end position="34"/>
    </location>
</feature>
<feature type="transmembrane region" description="Helical" evidence="3">
    <location>
        <begin position="35"/>
        <end position="55"/>
    </location>
</feature>
<feature type="topological domain" description="Cytoplasmic" evidence="3">
    <location>
        <begin position="56"/>
        <end position="1483"/>
    </location>
</feature>
<feature type="domain" description="PNPLA" evidence="4">
    <location>
        <begin position="927"/>
        <end position="1093"/>
    </location>
</feature>
<feature type="region of interest" description="Disordered" evidence="5">
    <location>
        <begin position="348"/>
        <end position="380"/>
    </location>
</feature>
<feature type="region of interest" description="Disordered" evidence="5">
    <location>
        <begin position="404"/>
        <end position="440"/>
    </location>
</feature>
<feature type="region of interest" description="Disordered" evidence="5">
    <location>
        <begin position="1349"/>
        <end position="1483"/>
    </location>
</feature>
<feature type="short sequence motif" description="GXGXXG" evidence="4">
    <location>
        <begin position="931"/>
        <end position="936"/>
    </location>
</feature>
<feature type="short sequence motif" description="GXSXG" evidence="4">
    <location>
        <begin position="958"/>
        <end position="962"/>
    </location>
</feature>
<feature type="short sequence motif" description="DGA/G" evidence="4">
    <location>
        <begin position="1080"/>
        <end position="1082"/>
    </location>
</feature>
<feature type="compositionally biased region" description="Polar residues" evidence="5">
    <location>
        <begin position="413"/>
        <end position="440"/>
    </location>
</feature>
<feature type="compositionally biased region" description="Polar residues" evidence="5">
    <location>
        <begin position="1351"/>
        <end position="1373"/>
    </location>
</feature>
<feature type="compositionally biased region" description="Basic and acidic residues" evidence="5">
    <location>
        <begin position="1382"/>
        <end position="1396"/>
    </location>
</feature>
<feature type="compositionally biased region" description="Low complexity" evidence="5">
    <location>
        <begin position="1410"/>
        <end position="1419"/>
    </location>
</feature>
<feature type="compositionally biased region" description="Basic and acidic residues" evidence="5">
    <location>
        <begin position="1445"/>
        <end position="1458"/>
    </location>
</feature>
<feature type="compositionally biased region" description="Low complexity" evidence="5">
    <location>
        <begin position="1465"/>
        <end position="1474"/>
    </location>
</feature>
<feature type="active site" description="Nucleophile" evidence="4">
    <location>
        <position position="960"/>
    </location>
</feature>
<feature type="active site" description="Proton acceptor" evidence="4">
    <location>
        <position position="1080"/>
    </location>
</feature>
<feature type="binding site" evidence="3">
    <location>
        <begin position="174"/>
        <end position="301"/>
    </location>
    <ligand>
        <name>a nucleoside 3',5'-cyclic phosphate</name>
        <dbReference type="ChEBI" id="CHEBI:58464"/>
        <label>1</label>
    </ligand>
</feature>
<feature type="binding site" evidence="3">
    <location>
        <begin position="456"/>
        <end position="585"/>
    </location>
    <ligand>
        <name>a nucleoside 3',5'-cyclic phosphate</name>
        <dbReference type="ChEBI" id="CHEBI:58464"/>
        <label>2</label>
    </ligand>
</feature>
<feature type="binding site" evidence="3">
    <location>
        <begin position="574"/>
        <end position="701"/>
    </location>
    <ligand>
        <name>a nucleoside 3',5'-cyclic phosphate</name>
        <dbReference type="ChEBI" id="CHEBI:58464"/>
        <label>3</label>
    </ligand>
</feature>
<feature type="modified residue" description="Phosphoserine" evidence="2">
    <location>
        <position position="418"/>
    </location>
</feature>
<feature type="modified residue" description="Phosphoserine" evidence="2">
    <location>
        <position position="424"/>
    </location>
</feature>
<feature type="modified residue" description="Phosphoserine" evidence="2">
    <location>
        <position position="1174"/>
    </location>
</feature>